<accession>A5VM87</accession>
<name>CBIA_LIMRD</name>
<organism>
    <name type="scientific">Limosilactobacillus reuteri (strain DSM 20016)</name>
    <name type="common">Lactobacillus reuteri</name>
    <dbReference type="NCBI Taxonomy" id="557436"/>
    <lineage>
        <taxon>Bacteria</taxon>
        <taxon>Bacillati</taxon>
        <taxon>Bacillota</taxon>
        <taxon>Bacilli</taxon>
        <taxon>Lactobacillales</taxon>
        <taxon>Lactobacillaceae</taxon>
        <taxon>Limosilactobacillus</taxon>
    </lineage>
</organism>
<sequence length="454" mass="50775">MKKVLIAGVTSGSGKTTAVLGILKALNEKYTIQSYKVGPDYVDTKFHTRITNRPTRNLDNYLVPDPQVLNYLFTANTENIDLGIIEGVMGLYDGLGTDKDAYSTASIAKQLNIPVILVINARATSTSAAAILKGFIDFDKKVPIKGVIINNVMSENHYKLIAGAIHRYLDLPILGYLPHDSTISLPSRQLGLVPDDELPNVDKKIAKVAEDVKAHVDLQKLLSLATSVSEKVVDPFNIPKTRLRLGIAKDKAFNFYYADNIHLLEKTGIELIPFSPISDNHLPDVDALYFGGGYPEEFASRLAANEFLKKEVYEFSQANKPIYAECGGLMYLGKVLKQGENEFPMVGIFDGMSEMTPRLKRFGYCEAYTQVDCMLGNRGQKIVGHEFHHSMFKQLDQQLKPVLLMKKVRDNQIVDTWSGGYQIRKTFASYLHVHFYQNPKLFIQFLNNLGADVQ</sequence>
<protein>
    <recommendedName>
        <fullName evidence="1">Cobyrinate a,c-diamide synthase</fullName>
        <ecNumber evidence="1">6.3.5.11</ecNumber>
    </recommendedName>
    <alternativeName>
        <fullName evidence="1">Cobyrinic acid a,c-diamide synthetase</fullName>
    </alternativeName>
</protein>
<reference key="1">
    <citation type="journal article" date="2011" name="PLoS Genet.">
        <title>The evolution of host specialization in the vertebrate gut symbiont Lactobacillus reuteri.</title>
        <authorList>
            <person name="Frese S.A."/>
            <person name="Benson A.K."/>
            <person name="Tannock G.W."/>
            <person name="Loach D.M."/>
            <person name="Kim J."/>
            <person name="Zhang M."/>
            <person name="Oh P.L."/>
            <person name="Heng N.C."/>
            <person name="Patil P.B."/>
            <person name="Juge N."/>
            <person name="Mackenzie D.A."/>
            <person name="Pearson B.M."/>
            <person name="Lapidus A."/>
            <person name="Dalin E."/>
            <person name="Tice H."/>
            <person name="Goltsman E."/>
            <person name="Land M."/>
            <person name="Hauser L."/>
            <person name="Ivanova N."/>
            <person name="Kyrpides N.C."/>
            <person name="Walter J."/>
        </authorList>
    </citation>
    <scope>NUCLEOTIDE SEQUENCE [LARGE SCALE GENOMIC DNA]</scope>
    <source>
        <strain>DSM 20016</strain>
    </source>
</reference>
<gene>
    <name evidence="1" type="primary">cbiA</name>
    <name type="ordered locus">Lreu_1722</name>
</gene>
<keyword id="KW-0067">ATP-binding</keyword>
<keyword id="KW-0169">Cobalamin biosynthesis</keyword>
<keyword id="KW-0315">Glutamine amidotransferase</keyword>
<keyword id="KW-0436">Ligase</keyword>
<keyword id="KW-0460">Magnesium</keyword>
<keyword id="KW-0547">Nucleotide-binding</keyword>
<keyword id="KW-1185">Reference proteome</keyword>
<evidence type="ECO:0000255" key="1">
    <source>
        <dbReference type="HAMAP-Rule" id="MF_00027"/>
    </source>
</evidence>
<dbReference type="EC" id="6.3.5.11" evidence="1"/>
<dbReference type="EMBL" id="CP000705">
    <property type="protein sequence ID" value="ABQ83961.1"/>
    <property type="molecule type" value="Genomic_DNA"/>
</dbReference>
<dbReference type="RefSeq" id="WP_003669156.1">
    <property type="nucleotide sequence ID" value="NC_009513.1"/>
</dbReference>
<dbReference type="SMR" id="A5VM87"/>
<dbReference type="STRING" id="557436.Lreu_1722"/>
<dbReference type="KEGG" id="lre:Lreu_1722"/>
<dbReference type="PATRIC" id="fig|557436.17.peg.644"/>
<dbReference type="eggNOG" id="COG1797">
    <property type="taxonomic scope" value="Bacteria"/>
</dbReference>
<dbReference type="HOGENOM" id="CLU_022752_2_0_9"/>
<dbReference type="OMA" id="QPFKCGP"/>
<dbReference type="UniPathway" id="UPA00148">
    <property type="reaction ID" value="UER00231"/>
</dbReference>
<dbReference type="Proteomes" id="UP000001991">
    <property type="component" value="Chromosome"/>
</dbReference>
<dbReference type="GO" id="GO:0005524">
    <property type="term" value="F:ATP binding"/>
    <property type="evidence" value="ECO:0007669"/>
    <property type="project" value="UniProtKB-UniRule"/>
</dbReference>
<dbReference type="GO" id="GO:0042242">
    <property type="term" value="F:cobyrinic acid a,c-diamide synthase activity"/>
    <property type="evidence" value="ECO:0007669"/>
    <property type="project" value="UniProtKB-UniRule"/>
</dbReference>
<dbReference type="GO" id="GO:0009236">
    <property type="term" value="P:cobalamin biosynthetic process"/>
    <property type="evidence" value="ECO:0007669"/>
    <property type="project" value="UniProtKB-UniRule"/>
</dbReference>
<dbReference type="CDD" id="cd03130">
    <property type="entry name" value="GATase1_CobB"/>
    <property type="match status" value="1"/>
</dbReference>
<dbReference type="Gene3D" id="3.40.50.880">
    <property type="match status" value="1"/>
</dbReference>
<dbReference type="Gene3D" id="3.40.50.300">
    <property type="entry name" value="P-loop containing nucleotide triphosphate hydrolases"/>
    <property type="match status" value="1"/>
</dbReference>
<dbReference type="HAMAP" id="MF_00027">
    <property type="entry name" value="CobB_CbiA"/>
    <property type="match status" value="1"/>
</dbReference>
<dbReference type="InterPro" id="IPR004484">
    <property type="entry name" value="CbiA/CobB_synth"/>
</dbReference>
<dbReference type="InterPro" id="IPR029062">
    <property type="entry name" value="Class_I_gatase-like"/>
</dbReference>
<dbReference type="InterPro" id="IPR002586">
    <property type="entry name" value="CobQ/CobB/MinD/ParA_Nub-bd_dom"/>
</dbReference>
<dbReference type="InterPro" id="IPR011698">
    <property type="entry name" value="GATase_3"/>
</dbReference>
<dbReference type="InterPro" id="IPR027417">
    <property type="entry name" value="P-loop_NTPase"/>
</dbReference>
<dbReference type="NCBIfam" id="TIGR00379">
    <property type="entry name" value="cobB"/>
    <property type="match status" value="1"/>
</dbReference>
<dbReference type="NCBIfam" id="NF002204">
    <property type="entry name" value="PRK01077.1"/>
    <property type="match status" value="1"/>
</dbReference>
<dbReference type="PANTHER" id="PTHR43873">
    <property type="entry name" value="COBYRINATE A,C-DIAMIDE SYNTHASE"/>
    <property type="match status" value="1"/>
</dbReference>
<dbReference type="PANTHER" id="PTHR43873:SF1">
    <property type="entry name" value="COBYRINATE A,C-DIAMIDE SYNTHASE"/>
    <property type="match status" value="1"/>
</dbReference>
<dbReference type="Pfam" id="PF01656">
    <property type="entry name" value="CbiA"/>
    <property type="match status" value="1"/>
</dbReference>
<dbReference type="Pfam" id="PF07685">
    <property type="entry name" value="GATase_3"/>
    <property type="match status" value="1"/>
</dbReference>
<dbReference type="SUPFAM" id="SSF52317">
    <property type="entry name" value="Class I glutamine amidotransferase-like"/>
    <property type="match status" value="1"/>
</dbReference>
<dbReference type="SUPFAM" id="SSF52540">
    <property type="entry name" value="P-loop containing nucleoside triphosphate hydrolases"/>
    <property type="match status" value="1"/>
</dbReference>
<dbReference type="PROSITE" id="PS51274">
    <property type="entry name" value="GATASE_COBBQ"/>
    <property type="match status" value="1"/>
</dbReference>
<proteinExistence type="inferred from homology"/>
<feature type="chain" id="PRO_1000090216" description="Cobyrinate a,c-diamide synthase">
    <location>
        <begin position="1"/>
        <end position="454"/>
    </location>
</feature>
<feature type="domain" description="GATase cobBQ-type" evidence="1">
    <location>
        <begin position="244"/>
        <end position="440"/>
    </location>
</feature>
<feature type="active site" description="Nucleophile" evidence="1">
    <location>
        <position position="326"/>
    </location>
</feature>
<feature type="site" description="Increases nucleophilicity of active site Cys" evidence="1">
    <location>
        <position position="432"/>
    </location>
</feature>
<comment type="function">
    <text evidence="1">Catalyzes the ATP-dependent amidation of the two carboxylate groups at positions a and c of cobyrinate, using either L-glutamine or ammonia as the nitrogen source.</text>
</comment>
<comment type="catalytic activity">
    <reaction evidence="1">
        <text>cob(II)yrinate + 2 L-glutamine + 2 ATP + 2 H2O = cob(II)yrinate a,c diamide + 2 L-glutamate + 2 ADP + 2 phosphate + 2 H(+)</text>
        <dbReference type="Rhea" id="RHEA:26289"/>
        <dbReference type="ChEBI" id="CHEBI:15377"/>
        <dbReference type="ChEBI" id="CHEBI:15378"/>
        <dbReference type="ChEBI" id="CHEBI:29985"/>
        <dbReference type="ChEBI" id="CHEBI:30616"/>
        <dbReference type="ChEBI" id="CHEBI:43474"/>
        <dbReference type="ChEBI" id="CHEBI:58359"/>
        <dbReference type="ChEBI" id="CHEBI:58537"/>
        <dbReference type="ChEBI" id="CHEBI:58894"/>
        <dbReference type="ChEBI" id="CHEBI:456216"/>
        <dbReference type="EC" id="6.3.5.11"/>
    </reaction>
</comment>
<comment type="cofactor">
    <cofactor evidence="1">
        <name>Mg(2+)</name>
        <dbReference type="ChEBI" id="CHEBI:18420"/>
    </cofactor>
</comment>
<comment type="pathway">
    <text evidence="1">Cofactor biosynthesis; adenosylcobalamin biosynthesis; cob(II)yrinate a,c-diamide from sirohydrochlorin (anaerobic route): step 10/10.</text>
</comment>
<comment type="domain">
    <text evidence="1">Comprises of two domains. The C-terminal domain contains the binding site for glutamine and catalyzes the hydrolysis of this substrate to glutamate and ammonia. The N-terminal domain is anticipated to bind ATP and cobyrinate and catalyzes the ultimate synthesis of the diamide product. The ammonia produced via the glutaminase domain is probably translocated to the adjacent domain via a molecular tunnel, where it reacts with an activated intermediate.</text>
</comment>
<comment type="miscellaneous">
    <text evidence="1">The a and c carboxylates of cobyrinate are activated for nucleophilic attack via formation of a phosphorylated intermediate by ATP. CbiA catalyzes first the amidation of the c-carboxylate, and then that of the a-carboxylate.</text>
</comment>
<comment type="similarity">
    <text evidence="1">Belongs to the CobB/CbiA family.</text>
</comment>